<protein>
    <recommendedName>
        <fullName>Adenylate kinase</fullName>
        <shortName>AK</shortName>
        <ecNumber>2.7.4.3</ecNumber>
    </recommendedName>
    <alternativeName>
        <fullName>ATP-AMP transphosphorylase</fullName>
    </alternativeName>
</protein>
<keyword id="KW-0067">ATP-binding</keyword>
<keyword id="KW-0963">Cytoplasm</keyword>
<keyword id="KW-0418">Kinase</keyword>
<keyword id="KW-0547">Nucleotide-binding</keyword>
<keyword id="KW-1185">Reference proteome</keyword>
<keyword id="KW-0808">Transferase</keyword>
<gene>
    <name type="primary">adkA</name>
    <name type="synonym">adk</name>
    <name type="ordered locus">MTH_27</name>
</gene>
<dbReference type="EC" id="2.7.4.3"/>
<dbReference type="EMBL" id="AE000666">
    <property type="protein sequence ID" value="AAB84536.1"/>
    <property type="status" value="ALT_INIT"/>
    <property type="molecule type" value="Genomic_DNA"/>
</dbReference>
<dbReference type="PIR" id="A69134">
    <property type="entry name" value="A69134"/>
</dbReference>
<dbReference type="RefSeq" id="WP_048060730.1">
    <property type="nucleotide sequence ID" value="NC_000916.1"/>
</dbReference>
<dbReference type="SMR" id="O26135"/>
<dbReference type="FunCoup" id="O26135">
    <property type="interactions" value="108"/>
</dbReference>
<dbReference type="STRING" id="187420.MTH_27"/>
<dbReference type="PaxDb" id="187420-MTH_27"/>
<dbReference type="EnsemblBacteria" id="AAB84536">
    <property type="protein sequence ID" value="AAB84536"/>
    <property type="gene ID" value="MTH_27"/>
</dbReference>
<dbReference type="KEGG" id="mth:MTH_27"/>
<dbReference type="PATRIC" id="fig|187420.15.peg.27"/>
<dbReference type="HOGENOM" id="CLU_119371_0_0_2"/>
<dbReference type="InParanoid" id="O26135"/>
<dbReference type="Proteomes" id="UP000005223">
    <property type="component" value="Chromosome"/>
</dbReference>
<dbReference type="GO" id="GO:0005737">
    <property type="term" value="C:cytoplasm"/>
    <property type="evidence" value="ECO:0007669"/>
    <property type="project" value="UniProtKB-SubCell"/>
</dbReference>
<dbReference type="GO" id="GO:0004017">
    <property type="term" value="F:adenylate kinase activity"/>
    <property type="evidence" value="ECO:0007669"/>
    <property type="project" value="UniProtKB-UniRule"/>
</dbReference>
<dbReference type="GO" id="GO:0005524">
    <property type="term" value="F:ATP binding"/>
    <property type="evidence" value="ECO:0007669"/>
    <property type="project" value="UniProtKB-UniRule"/>
</dbReference>
<dbReference type="Gene3D" id="3.40.50.300">
    <property type="entry name" value="P-loop containing nucleotide triphosphate hydrolases"/>
    <property type="match status" value="1"/>
</dbReference>
<dbReference type="HAMAP" id="MF_00234">
    <property type="entry name" value="Adenylate_kinase_AdkA"/>
    <property type="match status" value="1"/>
</dbReference>
<dbReference type="InterPro" id="IPR023477">
    <property type="entry name" value="Adenylate_kinase_AdkA"/>
</dbReference>
<dbReference type="InterPro" id="IPR027417">
    <property type="entry name" value="P-loop_NTPase"/>
</dbReference>
<dbReference type="NCBIfam" id="NF003122">
    <property type="entry name" value="PRK04040.1"/>
    <property type="match status" value="1"/>
</dbReference>
<dbReference type="Pfam" id="PF13207">
    <property type="entry name" value="AAA_17"/>
    <property type="match status" value="1"/>
</dbReference>
<dbReference type="SUPFAM" id="SSF52540">
    <property type="entry name" value="P-loop containing nucleoside triphosphate hydrolases"/>
    <property type="match status" value="1"/>
</dbReference>
<proteinExistence type="inferred from homology"/>
<comment type="catalytic activity">
    <reaction>
        <text>AMP + ATP = 2 ADP</text>
        <dbReference type="Rhea" id="RHEA:12973"/>
        <dbReference type="ChEBI" id="CHEBI:30616"/>
        <dbReference type="ChEBI" id="CHEBI:456215"/>
        <dbReference type="ChEBI" id="CHEBI:456216"/>
        <dbReference type="EC" id="2.7.4.3"/>
    </reaction>
</comment>
<comment type="subcellular location">
    <subcellularLocation>
        <location evidence="1">Cytoplasm</location>
    </subcellularLocation>
</comment>
<comment type="similarity">
    <text evidence="2">Belongs to the archaeal adenylate kinase family.</text>
</comment>
<comment type="sequence caution" evidence="2">
    <conflict type="erroneous initiation">
        <sequence resource="EMBL-CDS" id="AAB84536"/>
    </conflict>
</comment>
<organism>
    <name type="scientific">Methanothermobacter thermautotrophicus (strain ATCC 29096 / DSM 1053 / JCM 10044 / NBRC 100330 / Delta H)</name>
    <name type="common">Methanobacterium thermoautotrophicum</name>
    <dbReference type="NCBI Taxonomy" id="187420"/>
    <lineage>
        <taxon>Archaea</taxon>
        <taxon>Methanobacteriati</taxon>
        <taxon>Methanobacteriota</taxon>
        <taxon>Methanomada group</taxon>
        <taxon>Methanobacteria</taxon>
        <taxon>Methanobacteriales</taxon>
        <taxon>Methanobacteriaceae</taxon>
        <taxon>Methanothermobacter</taxon>
    </lineage>
</organism>
<reference key="1">
    <citation type="journal article" date="1997" name="J. Bacteriol.">
        <title>Complete genome sequence of Methanobacterium thermoautotrophicum deltaH: functional analysis and comparative genomics.</title>
        <authorList>
            <person name="Smith D.R."/>
            <person name="Doucette-Stamm L.A."/>
            <person name="Deloughery C."/>
            <person name="Lee H.-M."/>
            <person name="Dubois J."/>
            <person name="Aldredge T."/>
            <person name="Bashirzadeh R."/>
            <person name="Blakely D."/>
            <person name="Cook R."/>
            <person name="Gilbert K."/>
            <person name="Harrison D."/>
            <person name="Hoang L."/>
            <person name="Keagle P."/>
            <person name="Lumm W."/>
            <person name="Pothier B."/>
            <person name="Qiu D."/>
            <person name="Spadafora R."/>
            <person name="Vicare R."/>
            <person name="Wang Y."/>
            <person name="Wierzbowski J."/>
            <person name="Gibson R."/>
            <person name="Jiwani N."/>
            <person name="Caruso A."/>
            <person name="Bush D."/>
            <person name="Safer H."/>
            <person name="Patwell D."/>
            <person name="Prabhakar S."/>
            <person name="McDougall S."/>
            <person name="Shimer G."/>
            <person name="Goyal A."/>
            <person name="Pietrovski S."/>
            <person name="Church G.M."/>
            <person name="Daniels C.J."/>
            <person name="Mao J.-I."/>
            <person name="Rice P."/>
            <person name="Noelling J."/>
            <person name="Reeve J.N."/>
        </authorList>
    </citation>
    <scope>NUCLEOTIDE SEQUENCE [LARGE SCALE GENOMIC DNA]</scope>
    <source>
        <strain>ATCC 29096 / DSM 1053 / JCM 10044 / NBRC 100330 / Delta H</strain>
    </source>
</reference>
<accession>O26135</accession>
<name>KADA_METTH</name>
<evidence type="ECO:0000250" key="1"/>
<evidence type="ECO:0000305" key="2"/>
<sequence>MKVVVVAGIPGSGSTTVLENTLKELDYLNVNYGDVMLEIAVEKGLVENRDQMRTLPPEVQKDIQRAAAKSIRERSLENNIIVDTHCTIKTPAGFLPGLPVWVLEELEPDMFVLVEADAEEIFTRRISDKTRDRDVESLQEIDLHQQMNRAAAMAYATLTGATVKIVKNHNNQLESAVSEMKSVLE</sequence>
<feature type="chain" id="PRO_0000131818" description="Adenylate kinase">
    <location>
        <begin position="1"/>
        <end position="185"/>
    </location>
</feature>
<feature type="binding site" evidence="1">
    <location>
        <begin position="8"/>
        <end position="16"/>
    </location>
    <ligand>
        <name>ATP</name>
        <dbReference type="ChEBI" id="CHEBI:30616"/>
    </ligand>
</feature>